<comment type="subcellular location">
    <subcellularLocation>
        <location evidence="1">Cell inner membrane</location>
        <topology evidence="1">Multi-pass membrane protein</topology>
    </subcellularLocation>
</comment>
<comment type="similarity">
    <text evidence="1">Belongs to the UPF0259 family.</text>
</comment>
<feature type="chain" id="PRO_1000136584" description="UPF0259 membrane protein YciC">
    <location>
        <begin position="1"/>
        <end position="247"/>
    </location>
</feature>
<feature type="transmembrane region" description="Helical" evidence="1">
    <location>
        <begin position="20"/>
        <end position="40"/>
    </location>
</feature>
<feature type="transmembrane region" description="Helical" evidence="1">
    <location>
        <begin position="87"/>
        <end position="107"/>
    </location>
</feature>
<feature type="transmembrane region" description="Helical" evidence="1">
    <location>
        <begin position="118"/>
        <end position="140"/>
    </location>
</feature>
<feature type="transmembrane region" description="Helical" evidence="1">
    <location>
        <begin position="152"/>
        <end position="172"/>
    </location>
</feature>
<feature type="transmembrane region" description="Helical" evidence="1">
    <location>
        <begin position="187"/>
        <end position="209"/>
    </location>
</feature>
<feature type="transmembrane region" description="Helical" evidence="1">
    <location>
        <begin position="225"/>
        <end position="245"/>
    </location>
</feature>
<sequence>MSITAQSVYRDTGNFFRNQFMTILLVSLLCAFITVVLGHVFSPSDAQLAQLNDGVPVSGSSGLFDLVQNMSPEQQQILLQASAASTFSGLIGNAILAGGVILIIQLVSAGQRVSALRAIGASAPILPKLFILIFLTTLLVQIGIMLVVVPGIIMAILLALAPVMLVQDKMGIFASMRSSMRLTWANMRLVAPAVLSWLLAKTLLLLFASSFAALTPEIGAVLANTLSNLISAILLIYLFRLYMLIRQ</sequence>
<organism>
    <name type="scientific">Escherichia coli (strain SE11)</name>
    <dbReference type="NCBI Taxonomy" id="409438"/>
    <lineage>
        <taxon>Bacteria</taxon>
        <taxon>Pseudomonadati</taxon>
        <taxon>Pseudomonadota</taxon>
        <taxon>Gammaproteobacteria</taxon>
        <taxon>Enterobacterales</taxon>
        <taxon>Enterobacteriaceae</taxon>
        <taxon>Escherichia</taxon>
    </lineage>
</organism>
<keyword id="KW-0997">Cell inner membrane</keyword>
<keyword id="KW-1003">Cell membrane</keyword>
<keyword id="KW-0472">Membrane</keyword>
<keyword id="KW-0812">Transmembrane</keyword>
<keyword id="KW-1133">Transmembrane helix</keyword>
<gene>
    <name evidence="1" type="primary">yciC</name>
    <name type="ordered locus">ECSE_1304</name>
</gene>
<evidence type="ECO:0000255" key="1">
    <source>
        <dbReference type="HAMAP-Rule" id="MF_01067"/>
    </source>
</evidence>
<name>YCIC_ECOSE</name>
<dbReference type="EMBL" id="AP009240">
    <property type="protein sequence ID" value="BAG76828.1"/>
    <property type="molecule type" value="Genomic_DNA"/>
</dbReference>
<dbReference type="RefSeq" id="WP_000028540.1">
    <property type="nucleotide sequence ID" value="NC_011415.1"/>
</dbReference>
<dbReference type="KEGG" id="ecy:ECSE_1304"/>
<dbReference type="HOGENOM" id="CLU_073287_0_0_6"/>
<dbReference type="Proteomes" id="UP000008199">
    <property type="component" value="Chromosome"/>
</dbReference>
<dbReference type="GO" id="GO:0005886">
    <property type="term" value="C:plasma membrane"/>
    <property type="evidence" value="ECO:0007669"/>
    <property type="project" value="UniProtKB-SubCell"/>
</dbReference>
<dbReference type="HAMAP" id="MF_01067">
    <property type="entry name" value="UPF0259"/>
    <property type="match status" value="1"/>
</dbReference>
<dbReference type="InterPro" id="IPR009627">
    <property type="entry name" value="UPF0259"/>
</dbReference>
<dbReference type="NCBIfam" id="NF002774">
    <property type="entry name" value="PRK02868.1"/>
    <property type="match status" value="1"/>
</dbReference>
<dbReference type="Pfam" id="PF06790">
    <property type="entry name" value="UPF0259"/>
    <property type="match status" value="1"/>
</dbReference>
<reference key="1">
    <citation type="journal article" date="2008" name="DNA Res.">
        <title>Complete genome sequence and comparative analysis of the wild-type commensal Escherichia coli strain SE11 isolated from a healthy adult.</title>
        <authorList>
            <person name="Oshima K."/>
            <person name="Toh H."/>
            <person name="Ogura Y."/>
            <person name="Sasamoto H."/>
            <person name="Morita H."/>
            <person name="Park S.-H."/>
            <person name="Ooka T."/>
            <person name="Iyoda S."/>
            <person name="Taylor T.D."/>
            <person name="Hayashi T."/>
            <person name="Itoh K."/>
            <person name="Hattori M."/>
        </authorList>
    </citation>
    <scope>NUCLEOTIDE SEQUENCE [LARGE SCALE GENOMIC DNA]</scope>
    <source>
        <strain>SE11</strain>
    </source>
</reference>
<accession>B6I9W9</accession>
<proteinExistence type="inferred from homology"/>
<protein>
    <recommendedName>
        <fullName evidence="1">UPF0259 membrane protein YciC</fullName>
    </recommendedName>
</protein>